<feature type="chain" id="PRO_0000425292" description="Protein LIGHT-DEPENDENT SHORT HYPOCOTYLS 5">
    <location>
        <begin position="1"/>
        <end position="182"/>
    </location>
</feature>
<feature type="domain" description="ALOG" evidence="2">
    <location>
        <begin position="19"/>
        <end position="147"/>
    </location>
</feature>
<feature type="region of interest" description="Disordered" evidence="3">
    <location>
        <begin position="1"/>
        <end position="22"/>
    </location>
</feature>
<feature type="region of interest" description="Disordered" evidence="3">
    <location>
        <begin position="138"/>
        <end position="168"/>
    </location>
</feature>
<feature type="short sequence motif" description="Nuclear localization signal" evidence="1">
    <location>
        <begin position="145"/>
        <end position="149"/>
    </location>
</feature>
<feature type="compositionally biased region" description="Low complexity" evidence="3">
    <location>
        <begin position="1"/>
        <end position="16"/>
    </location>
</feature>
<gene>
    <name type="primary">LSH5</name>
    <name type="synonym">OBO5</name>
    <name type="ordered locus">At5g58500</name>
    <name type="ORF">MQJ2.11</name>
</gene>
<evidence type="ECO:0000250" key="1"/>
<evidence type="ECO:0000255" key="2">
    <source>
        <dbReference type="PROSITE-ProRule" id="PRU01033"/>
    </source>
</evidence>
<evidence type="ECO:0000256" key="3">
    <source>
        <dbReference type="SAM" id="MobiDB-lite"/>
    </source>
</evidence>
<evidence type="ECO:0000305" key="4"/>
<accession>Q9FGH2</accession>
<comment type="function">
    <text evidence="1">Probable transcription regulator that acts as a developmental regulator by promoting cell growth in response to light.</text>
</comment>
<comment type="subcellular location">
    <subcellularLocation>
        <location evidence="1">Nucleus</location>
    </subcellularLocation>
</comment>
<comment type="similarity">
    <text evidence="4">Belongs to the plant homeotic and developmental regulators ALOG protein family.</text>
</comment>
<protein>
    <recommendedName>
        <fullName>Protein LIGHT-DEPENDENT SHORT HYPOCOTYLS 5</fullName>
    </recommendedName>
    <alternativeName>
        <fullName>Protein ORGAN BOUNDARY 5</fullName>
    </alternativeName>
</protein>
<name>LSH5_ARATH</name>
<dbReference type="EMBL" id="AB025632">
    <property type="protein sequence ID" value="BAB10265.1"/>
    <property type="molecule type" value="Genomic_DNA"/>
</dbReference>
<dbReference type="EMBL" id="CP002688">
    <property type="protein sequence ID" value="AED97060.1"/>
    <property type="molecule type" value="Genomic_DNA"/>
</dbReference>
<dbReference type="EMBL" id="BT010401">
    <property type="protein sequence ID" value="AAQ56844.1"/>
    <property type="molecule type" value="mRNA"/>
</dbReference>
<dbReference type="RefSeq" id="NP_001318830.1">
    <property type="nucleotide sequence ID" value="NM_001345303.1"/>
</dbReference>
<dbReference type="SMR" id="Q9FGH2"/>
<dbReference type="FunCoup" id="Q9FGH2">
    <property type="interactions" value="1"/>
</dbReference>
<dbReference type="STRING" id="3702.Q9FGH2"/>
<dbReference type="PaxDb" id="3702-AT5G58500.1"/>
<dbReference type="ProteomicsDB" id="238634"/>
<dbReference type="EnsemblPlants" id="AT5G58500.1">
    <property type="protein sequence ID" value="AT5G58500.1"/>
    <property type="gene ID" value="AT5G58500"/>
</dbReference>
<dbReference type="GeneID" id="28721277"/>
<dbReference type="Gramene" id="AT5G58500.1">
    <property type="protein sequence ID" value="AT5G58500.1"/>
    <property type="gene ID" value="AT5G58500"/>
</dbReference>
<dbReference type="KEGG" id="ath:AT5G58500"/>
<dbReference type="Araport" id="AT5G58500"/>
<dbReference type="TAIR" id="AT5G58500">
    <property type="gene designation" value="LSH5"/>
</dbReference>
<dbReference type="eggNOG" id="ENOG502QPZE">
    <property type="taxonomic scope" value="Eukaryota"/>
</dbReference>
<dbReference type="HOGENOM" id="CLU_071168_1_0_1"/>
<dbReference type="InParanoid" id="Q9FGH2"/>
<dbReference type="OMA" id="QCTCPLK"/>
<dbReference type="OrthoDB" id="1906822at2759"/>
<dbReference type="PhylomeDB" id="Q9FGH2"/>
<dbReference type="PRO" id="PR:Q9FGH2"/>
<dbReference type="Proteomes" id="UP000006548">
    <property type="component" value="Chromosome 5"/>
</dbReference>
<dbReference type="ExpressionAtlas" id="Q9FGH2">
    <property type="expression patterns" value="baseline and differential"/>
</dbReference>
<dbReference type="GO" id="GO:0005634">
    <property type="term" value="C:nucleus"/>
    <property type="evidence" value="ECO:0000250"/>
    <property type="project" value="UniProtKB"/>
</dbReference>
<dbReference type="GO" id="GO:0003677">
    <property type="term" value="F:DNA binding"/>
    <property type="evidence" value="ECO:0007669"/>
    <property type="project" value="UniProtKB-KW"/>
</dbReference>
<dbReference type="GO" id="GO:0009299">
    <property type="term" value="P:mRNA transcription"/>
    <property type="evidence" value="ECO:0000250"/>
    <property type="project" value="UniProtKB"/>
</dbReference>
<dbReference type="GO" id="GO:0090698">
    <property type="term" value="P:post-embryonic plant morphogenesis"/>
    <property type="evidence" value="ECO:0000250"/>
    <property type="project" value="UniProtKB"/>
</dbReference>
<dbReference type="InterPro" id="IPR040222">
    <property type="entry name" value="ALOG"/>
</dbReference>
<dbReference type="InterPro" id="IPR006936">
    <property type="entry name" value="ALOG_dom"/>
</dbReference>
<dbReference type="PANTHER" id="PTHR31165">
    <property type="entry name" value="PROTEIN G1-LIKE2"/>
    <property type="match status" value="1"/>
</dbReference>
<dbReference type="PANTHER" id="PTHR31165:SF64">
    <property type="entry name" value="PROTEIN LIGHT-DEPENDENT SHORT HYPOCOTYLS 5"/>
    <property type="match status" value="1"/>
</dbReference>
<dbReference type="Pfam" id="PF04852">
    <property type="entry name" value="ALOG_dom"/>
    <property type="match status" value="1"/>
</dbReference>
<dbReference type="PROSITE" id="PS51697">
    <property type="entry name" value="ALOG"/>
    <property type="match status" value="1"/>
</dbReference>
<keyword id="KW-0217">Developmental protein</keyword>
<keyword id="KW-0238">DNA-binding</keyword>
<keyword id="KW-0539">Nucleus</keyword>
<keyword id="KW-1185">Reference proteome</keyword>
<keyword id="KW-0804">Transcription</keyword>
<keyword id="KW-0805">Transcription regulation</keyword>
<proteinExistence type="evidence at protein level"/>
<sequence length="182" mass="19689">MEGETAAKAAASSSSSPSRYESQKRRDWNTFLQYLRNHKPPLNLSRCSGAHVLEFLKYLDQFGKTKVHATACPFFGQPNPPSQCTCPLKQAWGSLDALIGRLRAAFEEIGGGLPESNPFAAKAVRIYLKEVRQTQAKARGIPYDKKKRKRPHTDTATPIAGDGDDAEGSGGAALVVTAATTV</sequence>
<reference key="1">
    <citation type="submission" date="1999-04" db="EMBL/GenBank/DDBJ databases">
        <title>Structural analysis of Arabidopsis thaliana chromosome 5. XI.</title>
        <authorList>
            <person name="Kaneko T."/>
            <person name="Katoh T."/>
            <person name="Asamizu E."/>
            <person name="Sato S."/>
            <person name="Nakamura Y."/>
            <person name="Kotani H."/>
            <person name="Tabata S."/>
        </authorList>
    </citation>
    <scope>NUCLEOTIDE SEQUENCE [LARGE SCALE GENOMIC DNA]</scope>
    <source>
        <strain>cv. Columbia</strain>
    </source>
</reference>
<reference key="2">
    <citation type="journal article" date="2017" name="Plant J.">
        <title>Araport11: a complete reannotation of the Arabidopsis thaliana reference genome.</title>
        <authorList>
            <person name="Cheng C.Y."/>
            <person name="Krishnakumar V."/>
            <person name="Chan A.P."/>
            <person name="Thibaud-Nissen F."/>
            <person name="Schobel S."/>
            <person name="Town C.D."/>
        </authorList>
    </citation>
    <scope>GENOME REANNOTATION</scope>
    <source>
        <strain>cv. Columbia</strain>
    </source>
</reference>
<reference key="3">
    <citation type="journal article" date="2003" name="Science">
        <title>Empirical analysis of transcriptional activity in the Arabidopsis genome.</title>
        <authorList>
            <person name="Yamada K."/>
            <person name="Lim J."/>
            <person name="Dale J.M."/>
            <person name="Chen H."/>
            <person name="Shinn P."/>
            <person name="Palm C.J."/>
            <person name="Southwick A.M."/>
            <person name="Wu H.C."/>
            <person name="Kim C.J."/>
            <person name="Nguyen M."/>
            <person name="Pham P.K."/>
            <person name="Cheuk R.F."/>
            <person name="Karlin-Newmann G."/>
            <person name="Liu S.X."/>
            <person name="Lam B."/>
            <person name="Sakano H."/>
            <person name="Wu T."/>
            <person name="Yu G."/>
            <person name="Miranda M."/>
            <person name="Quach H.L."/>
            <person name="Tripp M."/>
            <person name="Chang C.H."/>
            <person name="Lee J.M."/>
            <person name="Toriumi M.J."/>
            <person name="Chan M.M."/>
            <person name="Tang C.C."/>
            <person name="Onodera C.S."/>
            <person name="Deng J.M."/>
            <person name="Akiyama K."/>
            <person name="Ansari Y."/>
            <person name="Arakawa T."/>
            <person name="Banh J."/>
            <person name="Banno F."/>
            <person name="Bowser L."/>
            <person name="Brooks S.Y."/>
            <person name="Carninci P."/>
            <person name="Chao Q."/>
            <person name="Choy N."/>
            <person name="Enju A."/>
            <person name="Goldsmith A.D."/>
            <person name="Gurjal M."/>
            <person name="Hansen N.F."/>
            <person name="Hayashizaki Y."/>
            <person name="Johnson-Hopson C."/>
            <person name="Hsuan V.W."/>
            <person name="Iida K."/>
            <person name="Karnes M."/>
            <person name="Khan S."/>
            <person name="Koesema E."/>
            <person name="Ishida J."/>
            <person name="Jiang P.X."/>
            <person name="Jones T."/>
            <person name="Kawai J."/>
            <person name="Kamiya A."/>
            <person name="Meyers C."/>
            <person name="Nakajima M."/>
            <person name="Narusaka M."/>
            <person name="Seki M."/>
            <person name="Sakurai T."/>
            <person name="Satou M."/>
            <person name="Tamse R."/>
            <person name="Vaysberg M."/>
            <person name="Wallender E.K."/>
            <person name="Wong C."/>
            <person name="Yamamura Y."/>
            <person name="Yuan S."/>
            <person name="Shinozaki K."/>
            <person name="Davis R.W."/>
            <person name="Theologis A."/>
            <person name="Ecker J.R."/>
        </authorList>
    </citation>
    <scope>NUCLEOTIDE SEQUENCE [LARGE SCALE MRNA]</scope>
    <source>
        <strain>cv. Columbia</strain>
    </source>
</reference>
<reference key="4">
    <citation type="journal article" date="2004" name="Plant J.">
        <title>Overexpression of LSH1, a member of an uncharacterised gene family, causes enhanced light regulation of seedling development.</title>
        <authorList>
            <person name="Zhao L."/>
            <person name="Nakazawa M."/>
            <person name="Takase T."/>
            <person name="Manabe K."/>
            <person name="Kobayashi M."/>
            <person name="Seki M."/>
            <person name="Shinozaki K."/>
            <person name="Matsui M."/>
        </authorList>
    </citation>
    <scope>GENE FAMILY</scope>
    <scope>NOMENCLATURE</scope>
    <source>
        <strain>cv. Columbia</strain>
    </source>
</reference>
<reference key="5">
    <citation type="journal article" date="2011" name="Proc. Natl. Acad. Sci. U.S.A.">
        <title>Organ boundary1 defines a gene expressed at the junction between the shoot apical meristem and lateral organs.</title>
        <authorList>
            <person name="Cho E."/>
            <person name="Zambryski P.C."/>
        </authorList>
    </citation>
    <scope>GENE FAMILY</scope>
</reference>
<reference key="6">
    <citation type="journal article" date="2012" name="Biol. Direct">
        <title>ALOG domains: provenance of plant homeotic and developmental regulators from the DNA-binding domain of a novel class of DIRS1-type retroposons.</title>
        <authorList>
            <person name="Iyer L.M."/>
            <person name="Aravind L."/>
        </authorList>
    </citation>
    <scope>DNA-BINDING</scope>
    <scope>GENE FAMILY</scope>
</reference>
<organism>
    <name type="scientific">Arabidopsis thaliana</name>
    <name type="common">Mouse-ear cress</name>
    <dbReference type="NCBI Taxonomy" id="3702"/>
    <lineage>
        <taxon>Eukaryota</taxon>
        <taxon>Viridiplantae</taxon>
        <taxon>Streptophyta</taxon>
        <taxon>Embryophyta</taxon>
        <taxon>Tracheophyta</taxon>
        <taxon>Spermatophyta</taxon>
        <taxon>Magnoliopsida</taxon>
        <taxon>eudicotyledons</taxon>
        <taxon>Gunneridae</taxon>
        <taxon>Pentapetalae</taxon>
        <taxon>rosids</taxon>
        <taxon>malvids</taxon>
        <taxon>Brassicales</taxon>
        <taxon>Brassicaceae</taxon>
        <taxon>Camelineae</taxon>
        <taxon>Arabidopsis</taxon>
    </lineage>
</organism>